<reference key="1">
    <citation type="journal article" date="2005" name="Science">
        <title>The transcriptional landscape of the mammalian genome.</title>
        <authorList>
            <person name="Carninci P."/>
            <person name="Kasukawa T."/>
            <person name="Katayama S."/>
            <person name="Gough J."/>
            <person name="Frith M.C."/>
            <person name="Maeda N."/>
            <person name="Oyama R."/>
            <person name="Ravasi T."/>
            <person name="Lenhard B."/>
            <person name="Wells C."/>
            <person name="Kodzius R."/>
            <person name="Shimokawa K."/>
            <person name="Bajic V.B."/>
            <person name="Brenner S.E."/>
            <person name="Batalov S."/>
            <person name="Forrest A.R."/>
            <person name="Zavolan M."/>
            <person name="Davis M.J."/>
            <person name="Wilming L.G."/>
            <person name="Aidinis V."/>
            <person name="Allen J.E."/>
            <person name="Ambesi-Impiombato A."/>
            <person name="Apweiler R."/>
            <person name="Aturaliya R.N."/>
            <person name="Bailey T.L."/>
            <person name="Bansal M."/>
            <person name="Baxter L."/>
            <person name="Beisel K.W."/>
            <person name="Bersano T."/>
            <person name="Bono H."/>
            <person name="Chalk A.M."/>
            <person name="Chiu K.P."/>
            <person name="Choudhary V."/>
            <person name="Christoffels A."/>
            <person name="Clutterbuck D.R."/>
            <person name="Crowe M.L."/>
            <person name="Dalla E."/>
            <person name="Dalrymple B.P."/>
            <person name="de Bono B."/>
            <person name="Della Gatta G."/>
            <person name="di Bernardo D."/>
            <person name="Down T."/>
            <person name="Engstrom P."/>
            <person name="Fagiolini M."/>
            <person name="Faulkner G."/>
            <person name="Fletcher C.F."/>
            <person name="Fukushima T."/>
            <person name="Furuno M."/>
            <person name="Futaki S."/>
            <person name="Gariboldi M."/>
            <person name="Georgii-Hemming P."/>
            <person name="Gingeras T.R."/>
            <person name="Gojobori T."/>
            <person name="Green R.E."/>
            <person name="Gustincich S."/>
            <person name="Harbers M."/>
            <person name="Hayashi Y."/>
            <person name="Hensch T.K."/>
            <person name="Hirokawa N."/>
            <person name="Hill D."/>
            <person name="Huminiecki L."/>
            <person name="Iacono M."/>
            <person name="Ikeo K."/>
            <person name="Iwama A."/>
            <person name="Ishikawa T."/>
            <person name="Jakt M."/>
            <person name="Kanapin A."/>
            <person name="Katoh M."/>
            <person name="Kawasawa Y."/>
            <person name="Kelso J."/>
            <person name="Kitamura H."/>
            <person name="Kitano H."/>
            <person name="Kollias G."/>
            <person name="Krishnan S.P."/>
            <person name="Kruger A."/>
            <person name="Kummerfeld S.K."/>
            <person name="Kurochkin I.V."/>
            <person name="Lareau L.F."/>
            <person name="Lazarevic D."/>
            <person name="Lipovich L."/>
            <person name="Liu J."/>
            <person name="Liuni S."/>
            <person name="McWilliam S."/>
            <person name="Madan Babu M."/>
            <person name="Madera M."/>
            <person name="Marchionni L."/>
            <person name="Matsuda H."/>
            <person name="Matsuzawa S."/>
            <person name="Miki H."/>
            <person name="Mignone F."/>
            <person name="Miyake S."/>
            <person name="Morris K."/>
            <person name="Mottagui-Tabar S."/>
            <person name="Mulder N."/>
            <person name="Nakano N."/>
            <person name="Nakauchi H."/>
            <person name="Ng P."/>
            <person name="Nilsson R."/>
            <person name="Nishiguchi S."/>
            <person name="Nishikawa S."/>
            <person name="Nori F."/>
            <person name="Ohara O."/>
            <person name="Okazaki Y."/>
            <person name="Orlando V."/>
            <person name="Pang K.C."/>
            <person name="Pavan W.J."/>
            <person name="Pavesi G."/>
            <person name="Pesole G."/>
            <person name="Petrovsky N."/>
            <person name="Piazza S."/>
            <person name="Reed J."/>
            <person name="Reid J.F."/>
            <person name="Ring B.Z."/>
            <person name="Ringwald M."/>
            <person name="Rost B."/>
            <person name="Ruan Y."/>
            <person name="Salzberg S.L."/>
            <person name="Sandelin A."/>
            <person name="Schneider C."/>
            <person name="Schoenbach C."/>
            <person name="Sekiguchi K."/>
            <person name="Semple C.A."/>
            <person name="Seno S."/>
            <person name="Sessa L."/>
            <person name="Sheng Y."/>
            <person name="Shibata Y."/>
            <person name="Shimada H."/>
            <person name="Shimada K."/>
            <person name="Silva D."/>
            <person name="Sinclair B."/>
            <person name="Sperling S."/>
            <person name="Stupka E."/>
            <person name="Sugiura K."/>
            <person name="Sultana R."/>
            <person name="Takenaka Y."/>
            <person name="Taki K."/>
            <person name="Tammoja K."/>
            <person name="Tan S.L."/>
            <person name="Tang S."/>
            <person name="Taylor M.S."/>
            <person name="Tegner J."/>
            <person name="Teichmann S.A."/>
            <person name="Ueda H.R."/>
            <person name="van Nimwegen E."/>
            <person name="Verardo R."/>
            <person name="Wei C.L."/>
            <person name="Yagi K."/>
            <person name="Yamanishi H."/>
            <person name="Zabarovsky E."/>
            <person name="Zhu S."/>
            <person name="Zimmer A."/>
            <person name="Hide W."/>
            <person name="Bult C."/>
            <person name="Grimmond S.M."/>
            <person name="Teasdale R.D."/>
            <person name="Liu E.T."/>
            <person name="Brusic V."/>
            <person name="Quackenbush J."/>
            <person name="Wahlestedt C."/>
            <person name="Mattick J.S."/>
            <person name="Hume D.A."/>
            <person name="Kai C."/>
            <person name="Sasaki D."/>
            <person name="Tomaru Y."/>
            <person name="Fukuda S."/>
            <person name="Kanamori-Katayama M."/>
            <person name="Suzuki M."/>
            <person name="Aoki J."/>
            <person name="Arakawa T."/>
            <person name="Iida J."/>
            <person name="Imamura K."/>
            <person name="Itoh M."/>
            <person name="Kato T."/>
            <person name="Kawaji H."/>
            <person name="Kawagashira N."/>
            <person name="Kawashima T."/>
            <person name="Kojima M."/>
            <person name="Kondo S."/>
            <person name="Konno H."/>
            <person name="Nakano K."/>
            <person name="Ninomiya N."/>
            <person name="Nishio T."/>
            <person name="Okada M."/>
            <person name="Plessy C."/>
            <person name="Shibata K."/>
            <person name="Shiraki T."/>
            <person name="Suzuki S."/>
            <person name="Tagami M."/>
            <person name="Waki K."/>
            <person name="Watahiki A."/>
            <person name="Okamura-Oho Y."/>
            <person name="Suzuki H."/>
            <person name="Kawai J."/>
            <person name="Hayashizaki Y."/>
        </authorList>
    </citation>
    <scope>NUCLEOTIDE SEQUENCE [LARGE SCALE MRNA]</scope>
    <source>
        <strain>C57BL/6J</strain>
        <strain>NOD</strain>
    </source>
</reference>
<reference key="2">
    <citation type="journal article" date="2009" name="PLoS Biol.">
        <title>Lineage-specific biology revealed by a finished genome assembly of the mouse.</title>
        <authorList>
            <person name="Church D.M."/>
            <person name="Goodstadt L."/>
            <person name="Hillier L.W."/>
            <person name="Zody M.C."/>
            <person name="Goldstein S."/>
            <person name="She X."/>
            <person name="Bult C.J."/>
            <person name="Agarwala R."/>
            <person name="Cherry J.L."/>
            <person name="DiCuccio M."/>
            <person name="Hlavina W."/>
            <person name="Kapustin Y."/>
            <person name="Meric P."/>
            <person name="Maglott D."/>
            <person name="Birtle Z."/>
            <person name="Marques A.C."/>
            <person name="Graves T."/>
            <person name="Zhou S."/>
            <person name="Teague B."/>
            <person name="Potamousis K."/>
            <person name="Churas C."/>
            <person name="Place M."/>
            <person name="Herschleb J."/>
            <person name="Runnheim R."/>
            <person name="Forrest D."/>
            <person name="Amos-Landgraf J."/>
            <person name="Schwartz D.C."/>
            <person name="Cheng Z."/>
            <person name="Lindblad-Toh K."/>
            <person name="Eichler E.E."/>
            <person name="Ponting C.P."/>
        </authorList>
    </citation>
    <scope>NUCLEOTIDE SEQUENCE [LARGE SCALE GENOMIC DNA]</scope>
    <source>
        <strain>C57BL/6J</strain>
    </source>
</reference>
<reference key="3">
    <citation type="journal article" date="2004" name="Genome Res.">
        <title>The status, quality, and expansion of the NIH full-length cDNA project: the Mammalian Gene Collection (MGC).</title>
        <authorList>
            <consortium name="The MGC Project Team"/>
        </authorList>
    </citation>
    <scope>NUCLEOTIDE SEQUENCE [LARGE SCALE MRNA]</scope>
    <source>
        <strain>FVB/N</strain>
        <tissue>Mammary tumor</tissue>
    </source>
</reference>
<reference key="4">
    <citation type="journal article" date="2007" name="Proc. Natl. Acad. Sci. U.S.A.">
        <title>Large-scale phosphorylation analysis of mouse liver.</title>
        <authorList>
            <person name="Villen J."/>
            <person name="Beausoleil S.A."/>
            <person name="Gerber S.A."/>
            <person name="Gygi S.P."/>
        </authorList>
    </citation>
    <scope>IDENTIFICATION BY MASS SPECTROMETRY [LARGE SCALE ANALYSIS]</scope>
    <source>
        <tissue>Liver</tissue>
    </source>
</reference>
<reference key="5">
    <citation type="journal article" date="2009" name="Mol. Cell. Proteomics">
        <title>Large scale localization of protein phosphorylation by use of electron capture dissociation mass spectrometry.</title>
        <authorList>
            <person name="Sweet S.M."/>
            <person name="Bailey C.M."/>
            <person name="Cunningham D.L."/>
            <person name="Heath J.K."/>
            <person name="Cooper H.J."/>
        </authorList>
    </citation>
    <scope>PHOSPHORYLATION [LARGE SCALE ANALYSIS] AT SER-157</scope>
    <scope>IDENTIFICATION BY MASS SPECTROMETRY [LARGE SCALE ANALYSIS]</scope>
    <source>
        <tissue>Embryonic fibroblast</tissue>
    </source>
</reference>
<reference key="6">
    <citation type="journal article" date="2010" name="Cell">
        <title>A tissue-specific atlas of mouse protein phosphorylation and expression.</title>
        <authorList>
            <person name="Huttlin E.L."/>
            <person name="Jedrychowski M.P."/>
            <person name="Elias J.E."/>
            <person name="Goswami T."/>
            <person name="Rad R."/>
            <person name="Beausoleil S.A."/>
            <person name="Villen J."/>
            <person name="Haas W."/>
            <person name="Sowa M.E."/>
            <person name="Gygi S.P."/>
        </authorList>
    </citation>
    <scope>PHOSPHORYLATION [LARGE SCALE ANALYSIS] AT THR-156</scope>
    <scope>IDENTIFICATION BY MASS SPECTROMETRY [LARGE SCALE ANALYSIS]</scope>
    <source>
        <tissue>Heart</tissue>
        <tissue>Kidney</tissue>
        <tissue>Liver</tissue>
        <tissue>Lung</tissue>
        <tissue>Pancreas</tissue>
        <tissue>Spleen</tissue>
        <tissue>Testis</tissue>
    </source>
</reference>
<reference key="7">
    <citation type="journal article" date="2013" name="Mol. Cell">
        <title>SIRT5-mediated lysine desuccinylation impacts diverse metabolic pathways.</title>
        <authorList>
            <person name="Park J."/>
            <person name="Chen Y."/>
            <person name="Tishkoff D.X."/>
            <person name="Peng C."/>
            <person name="Tan M."/>
            <person name="Dai L."/>
            <person name="Xie Z."/>
            <person name="Zhang Y."/>
            <person name="Zwaans B.M."/>
            <person name="Skinner M.E."/>
            <person name="Lombard D.B."/>
            <person name="Zhao Y."/>
        </authorList>
    </citation>
    <scope>ACETYLATION [LARGE SCALE ANALYSIS] AT LYS-143</scope>
    <scope>IDENTIFICATION BY MASS SPECTROMETRY [LARGE SCALE ANALYSIS]</scope>
    <source>
        <tissue>Embryonic fibroblast</tissue>
    </source>
</reference>
<organism>
    <name type="scientific">Mus musculus</name>
    <name type="common">Mouse</name>
    <dbReference type="NCBI Taxonomy" id="10090"/>
    <lineage>
        <taxon>Eukaryota</taxon>
        <taxon>Metazoa</taxon>
        <taxon>Chordata</taxon>
        <taxon>Craniata</taxon>
        <taxon>Vertebrata</taxon>
        <taxon>Euteleostomi</taxon>
        <taxon>Mammalia</taxon>
        <taxon>Eutheria</taxon>
        <taxon>Euarchontoglires</taxon>
        <taxon>Glires</taxon>
        <taxon>Rodentia</taxon>
        <taxon>Myomorpha</taxon>
        <taxon>Muroidea</taxon>
        <taxon>Muridae</taxon>
        <taxon>Murinae</taxon>
        <taxon>Mus</taxon>
        <taxon>Mus</taxon>
    </lineage>
</organism>
<protein>
    <recommendedName>
        <fullName>Protein KTI12 homolog</fullName>
    </recommendedName>
</protein>
<evidence type="ECO:0000250" key="1">
    <source>
        <dbReference type="UniProtKB" id="Q96EK9"/>
    </source>
</evidence>
<evidence type="ECO:0000255" key="2"/>
<evidence type="ECO:0000256" key="3">
    <source>
        <dbReference type="SAM" id="MobiDB-lite"/>
    </source>
</evidence>
<evidence type="ECO:0000305" key="4"/>
<evidence type="ECO:0007744" key="5">
    <source>
    </source>
</evidence>
<evidence type="ECO:0007744" key="6">
    <source>
    </source>
</evidence>
<evidence type="ECO:0007744" key="7">
    <source>
    </source>
</evidence>
<dbReference type="EMBL" id="AK003197">
    <property type="protein sequence ID" value="BAB22635.1"/>
    <property type="molecule type" value="mRNA"/>
</dbReference>
<dbReference type="EMBL" id="AK148185">
    <property type="protein sequence ID" value="BAE28403.1"/>
    <property type="status" value="ALT_INIT"/>
    <property type="molecule type" value="mRNA"/>
</dbReference>
<dbReference type="EMBL" id="AK156755">
    <property type="protein sequence ID" value="BAE33838.1"/>
    <property type="molecule type" value="mRNA"/>
</dbReference>
<dbReference type="EMBL" id="AL607070">
    <property type="status" value="NOT_ANNOTATED_CDS"/>
    <property type="molecule type" value="Genomic_DNA"/>
</dbReference>
<dbReference type="EMBL" id="BC021493">
    <property type="protein sequence ID" value="AAH21493.1"/>
    <property type="molecule type" value="mRNA"/>
</dbReference>
<dbReference type="CCDS" id="CCDS18458.1"/>
<dbReference type="RefSeq" id="NP_083847.1">
    <property type="nucleotide sequence ID" value="NM_029571.2"/>
</dbReference>
<dbReference type="SMR" id="Q9D1R2"/>
<dbReference type="BioGRID" id="221377">
    <property type="interactions" value="1"/>
</dbReference>
<dbReference type="FunCoup" id="Q9D1R2">
    <property type="interactions" value="1554"/>
</dbReference>
<dbReference type="STRING" id="10090.ENSMUSP00000099799"/>
<dbReference type="iPTMnet" id="Q9D1R2"/>
<dbReference type="PhosphoSitePlus" id="Q9D1R2"/>
<dbReference type="jPOST" id="Q9D1R2"/>
<dbReference type="PaxDb" id="10090-ENSMUSP00000099799"/>
<dbReference type="PeptideAtlas" id="Q9D1R2"/>
<dbReference type="ProteomicsDB" id="265032"/>
<dbReference type="Pumba" id="Q9D1R2"/>
<dbReference type="DNASU" id="100087"/>
<dbReference type="Ensembl" id="ENSMUST00000102738.4">
    <property type="protein sequence ID" value="ENSMUSP00000099799.3"/>
    <property type="gene ID" value="ENSMUSG00000073775.5"/>
</dbReference>
<dbReference type="GeneID" id="100087"/>
<dbReference type="KEGG" id="mmu:100087"/>
<dbReference type="UCSC" id="uc008ubt.1">
    <property type="organism name" value="mouse"/>
</dbReference>
<dbReference type="AGR" id="MGI:1923547"/>
<dbReference type="CTD" id="112970"/>
<dbReference type="MGI" id="MGI:1923547">
    <property type="gene designation" value="Kti12"/>
</dbReference>
<dbReference type="VEuPathDB" id="HostDB:ENSMUSG00000073775"/>
<dbReference type="eggNOG" id="KOG3062">
    <property type="taxonomic scope" value="Eukaryota"/>
</dbReference>
<dbReference type="GeneTree" id="ENSGT00390000002443"/>
<dbReference type="HOGENOM" id="CLU_027147_0_0_1"/>
<dbReference type="InParanoid" id="Q9D1R2"/>
<dbReference type="OMA" id="THSRWDK"/>
<dbReference type="OrthoDB" id="9972657at2759"/>
<dbReference type="PhylomeDB" id="Q9D1R2"/>
<dbReference type="TreeFam" id="TF312974"/>
<dbReference type="BioGRID-ORCS" id="100087">
    <property type="hits" value="22 hits in 80 CRISPR screens"/>
</dbReference>
<dbReference type="PRO" id="PR:Q9D1R2"/>
<dbReference type="Proteomes" id="UP000000589">
    <property type="component" value="Chromosome 4"/>
</dbReference>
<dbReference type="RNAct" id="Q9D1R2">
    <property type="molecule type" value="protein"/>
</dbReference>
<dbReference type="Bgee" id="ENSMUSG00000073775">
    <property type="expression patterns" value="Expressed in interventricular septum and 249 other cell types or tissues"/>
</dbReference>
<dbReference type="GO" id="GO:0005524">
    <property type="term" value="F:ATP binding"/>
    <property type="evidence" value="ECO:0007669"/>
    <property type="project" value="UniProtKB-KW"/>
</dbReference>
<dbReference type="Gene3D" id="3.40.50.300">
    <property type="entry name" value="P-loop containing nucleotide triphosphate hydrolases"/>
    <property type="match status" value="2"/>
</dbReference>
<dbReference type="InterPro" id="IPR013641">
    <property type="entry name" value="KTI12/PSTK"/>
</dbReference>
<dbReference type="InterPro" id="IPR027417">
    <property type="entry name" value="P-loop_NTPase"/>
</dbReference>
<dbReference type="PANTHER" id="PTHR12435">
    <property type="match status" value="1"/>
</dbReference>
<dbReference type="Pfam" id="PF08433">
    <property type="entry name" value="KTI12"/>
    <property type="match status" value="1"/>
</dbReference>
<dbReference type="SUPFAM" id="SSF52540">
    <property type="entry name" value="P-loop containing nucleoside triphosphate hydrolases"/>
    <property type="match status" value="1"/>
</dbReference>
<sequence>MPLVVVCGLPSSGKSQRTEELRRALASEGRAVYVVDDASVLGAQDPTVYGDSAGEKALRAALRAAVERRLSRQDVVILDSVNYIKGFRYELYCLARAARTPLCLLYCVRPNWPSRELREASASENRDLAVSVSWRPRAETGGKSQAAGAVEEQRATSPVANGGVLAAVSKELDPEEILPSNPSAVMTPGSEKSAEPASCAFPPEVLESLALRFESPDSRNRWDRPLFTVVGLEEPLPLAEIRSALFENRAPPPHQSTQSQPLASGSFLHQLDQATSQVLTAVMEAQKSAVPGDFLKLPGTTEPLRFTRPLTLAELSRLRRQFISYTKMHPNNENLPQLANMFLQYLNQSLH</sequence>
<comment type="similarity">
    <text evidence="4">Belongs to the KTI12 family.</text>
</comment>
<comment type="sequence caution" evidence="4">
    <conflict type="erroneous initiation">
        <sequence resource="EMBL-CDS" id="BAE28403"/>
    </conflict>
</comment>
<accession>Q9D1R2</accession>
<accession>Q3UG06</accession>
<keyword id="KW-0007">Acetylation</keyword>
<keyword id="KW-0067">ATP-binding</keyword>
<keyword id="KW-0547">Nucleotide-binding</keyword>
<keyword id="KW-0597">Phosphoprotein</keyword>
<keyword id="KW-1185">Reference proteome</keyword>
<gene>
    <name type="primary">Kti12</name>
</gene>
<feature type="chain" id="PRO_0000285687" description="Protein KTI12 homolog">
    <location>
        <begin position="1"/>
        <end position="351"/>
    </location>
</feature>
<feature type="region of interest" description="Disordered" evidence="3">
    <location>
        <begin position="177"/>
        <end position="197"/>
    </location>
</feature>
<feature type="binding site" evidence="2">
    <location>
        <begin position="8"/>
        <end position="15"/>
    </location>
    <ligand>
        <name>ATP</name>
        <dbReference type="ChEBI" id="CHEBI:30616"/>
    </ligand>
</feature>
<feature type="modified residue" description="N6-acetyllysine" evidence="7">
    <location>
        <position position="143"/>
    </location>
</feature>
<feature type="modified residue" description="Phosphothreonine" evidence="6">
    <location>
        <position position="156"/>
    </location>
</feature>
<feature type="modified residue" description="Phosphoserine" evidence="5">
    <location>
        <position position="157"/>
    </location>
</feature>
<feature type="modified residue" description="Phosphoserine" evidence="1">
    <location>
        <position position="198"/>
    </location>
</feature>
<name>KTI12_MOUSE</name>
<proteinExistence type="evidence at protein level"/>